<organism>
    <name type="scientific">Marinomonas sp. (strain MWYL1)</name>
    <dbReference type="NCBI Taxonomy" id="400668"/>
    <lineage>
        <taxon>Bacteria</taxon>
        <taxon>Pseudomonadati</taxon>
        <taxon>Pseudomonadota</taxon>
        <taxon>Gammaproteobacteria</taxon>
        <taxon>Oceanospirillales</taxon>
        <taxon>Oceanospirillaceae</taxon>
        <taxon>Marinomonas</taxon>
    </lineage>
</organism>
<dbReference type="EMBL" id="CP000749">
    <property type="protein sequence ID" value="ABR73149.1"/>
    <property type="molecule type" value="Genomic_DNA"/>
</dbReference>
<dbReference type="SMR" id="A6W370"/>
<dbReference type="STRING" id="400668.Mmwyl1_4254"/>
<dbReference type="KEGG" id="mmw:Mmwyl1_4254"/>
<dbReference type="eggNOG" id="COG0099">
    <property type="taxonomic scope" value="Bacteria"/>
</dbReference>
<dbReference type="HOGENOM" id="CLU_103849_1_2_6"/>
<dbReference type="OrthoDB" id="9803610at2"/>
<dbReference type="GO" id="GO:0005829">
    <property type="term" value="C:cytosol"/>
    <property type="evidence" value="ECO:0007669"/>
    <property type="project" value="TreeGrafter"/>
</dbReference>
<dbReference type="GO" id="GO:0015935">
    <property type="term" value="C:small ribosomal subunit"/>
    <property type="evidence" value="ECO:0007669"/>
    <property type="project" value="TreeGrafter"/>
</dbReference>
<dbReference type="GO" id="GO:0019843">
    <property type="term" value="F:rRNA binding"/>
    <property type="evidence" value="ECO:0007669"/>
    <property type="project" value="UniProtKB-UniRule"/>
</dbReference>
<dbReference type="GO" id="GO:0003735">
    <property type="term" value="F:structural constituent of ribosome"/>
    <property type="evidence" value="ECO:0007669"/>
    <property type="project" value="InterPro"/>
</dbReference>
<dbReference type="GO" id="GO:0000049">
    <property type="term" value="F:tRNA binding"/>
    <property type="evidence" value="ECO:0007669"/>
    <property type="project" value="UniProtKB-UniRule"/>
</dbReference>
<dbReference type="GO" id="GO:0006412">
    <property type="term" value="P:translation"/>
    <property type="evidence" value="ECO:0007669"/>
    <property type="project" value="UniProtKB-UniRule"/>
</dbReference>
<dbReference type="FunFam" id="1.10.8.50:FF:000001">
    <property type="entry name" value="30S ribosomal protein S13"/>
    <property type="match status" value="1"/>
</dbReference>
<dbReference type="FunFam" id="4.10.910.10:FF:000001">
    <property type="entry name" value="30S ribosomal protein S13"/>
    <property type="match status" value="1"/>
</dbReference>
<dbReference type="Gene3D" id="1.10.8.50">
    <property type="match status" value="1"/>
</dbReference>
<dbReference type="Gene3D" id="4.10.910.10">
    <property type="entry name" value="30s ribosomal protein s13, domain 2"/>
    <property type="match status" value="1"/>
</dbReference>
<dbReference type="HAMAP" id="MF_01315">
    <property type="entry name" value="Ribosomal_uS13"/>
    <property type="match status" value="1"/>
</dbReference>
<dbReference type="InterPro" id="IPR027437">
    <property type="entry name" value="Rbsml_uS13_C"/>
</dbReference>
<dbReference type="InterPro" id="IPR001892">
    <property type="entry name" value="Ribosomal_uS13"/>
</dbReference>
<dbReference type="InterPro" id="IPR010979">
    <property type="entry name" value="Ribosomal_uS13-like_H2TH"/>
</dbReference>
<dbReference type="InterPro" id="IPR019980">
    <property type="entry name" value="Ribosomal_uS13_bac-type"/>
</dbReference>
<dbReference type="InterPro" id="IPR018269">
    <property type="entry name" value="Ribosomal_uS13_CS"/>
</dbReference>
<dbReference type="NCBIfam" id="TIGR03631">
    <property type="entry name" value="uS13_bact"/>
    <property type="match status" value="1"/>
</dbReference>
<dbReference type="PANTHER" id="PTHR10871">
    <property type="entry name" value="30S RIBOSOMAL PROTEIN S13/40S RIBOSOMAL PROTEIN S18"/>
    <property type="match status" value="1"/>
</dbReference>
<dbReference type="PANTHER" id="PTHR10871:SF1">
    <property type="entry name" value="SMALL RIBOSOMAL SUBUNIT PROTEIN US13M"/>
    <property type="match status" value="1"/>
</dbReference>
<dbReference type="Pfam" id="PF00416">
    <property type="entry name" value="Ribosomal_S13"/>
    <property type="match status" value="1"/>
</dbReference>
<dbReference type="PIRSF" id="PIRSF002134">
    <property type="entry name" value="Ribosomal_S13"/>
    <property type="match status" value="1"/>
</dbReference>
<dbReference type="SUPFAM" id="SSF46946">
    <property type="entry name" value="S13-like H2TH domain"/>
    <property type="match status" value="1"/>
</dbReference>
<dbReference type="PROSITE" id="PS00646">
    <property type="entry name" value="RIBOSOMAL_S13_1"/>
    <property type="match status" value="1"/>
</dbReference>
<dbReference type="PROSITE" id="PS50159">
    <property type="entry name" value="RIBOSOMAL_S13_2"/>
    <property type="match status" value="1"/>
</dbReference>
<accession>A6W370</accession>
<feature type="chain" id="PRO_1000086244" description="Small ribosomal subunit protein uS13">
    <location>
        <begin position="1"/>
        <end position="118"/>
    </location>
</feature>
<feature type="region of interest" description="Disordered" evidence="2">
    <location>
        <begin position="91"/>
        <end position="118"/>
    </location>
</feature>
<gene>
    <name evidence="1" type="primary">rpsM</name>
    <name type="ordered locus">Mmwyl1_4254</name>
</gene>
<name>RS13_MARMS</name>
<comment type="function">
    <text evidence="1">Located at the top of the head of the 30S subunit, it contacts several helices of the 16S rRNA. In the 70S ribosome it contacts the 23S rRNA (bridge B1a) and protein L5 of the 50S subunit (bridge B1b), connecting the 2 subunits; these bridges are implicated in subunit movement. Contacts the tRNAs in the A and P-sites.</text>
</comment>
<comment type="subunit">
    <text evidence="1">Part of the 30S ribosomal subunit. Forms a loose heterodimer with protein S19. Forms two bridges to the 50S subunit in the 70S ribosome.</text>
</comment>
<comment type="similarity">
    <text evidence="1">Belongs to the universal ribosomal protein uS13 family.</text>
</comment>
<reference key="1">
    <citation type="submission" date="2007-06" db="EMBL/GenBank/DDBJ databases">
        <title>Complete sequence of Marinomonas sp. MWYL1.</title>
        <authorList>
            <consortium name="US DOE Joint Genome Institute"/>
            <person name="Copeland A."/>
            <person name="Lucas S."/>
            <person name="Lapidus A."/>
            <person name="Barry K."/>
            <person name="Glavina del Rio T."/>
            <person name="Dalin E."/>
            <person name="Tice H."/>
            <person name="Pitluck S."/>
            <person name="Kiss H."/>
            <person name="Brettin T."/>
            <person name="Bruce D."/>
            <person name="Detter J.C."/>
            <person name="Han C."/>
            <person name="Schmutz J."/>
            <person name="Larimer F."/>
            <person name="Land M."/>
            <person name="Hauser L."/>
            <person name="Kyrpides N."/>
            <person name="Kim E."/>
            <person name="Johnston A.W.B."/>
            <person name="Todd J.D."/>
            <person name="Rogers R."/>
            <person name="Wexler M."/>
            <person name="Bond P.L."/>
            <person name="Li Y."/>
            <person name="Richardson P."/>
        </authorList>
    </citation>
    <scope>NUCLEOTIDE SEQUENCE [LARGE SCALE GENOMIC DNA]</scope>
    <source>
        <strain>MWYL1</strain>
    </source>
</reference>
<proteinExistence type="inferred from homology"/>
<evidence type="ECO:0000255" key="1">
    <source>
        <dbReference type="HAMAP-Rule" id="MF_01315"/>
    </source>
</evidence>
<evidence type="ECO:0000256" key="2">
    <source>
        <dbReference type="SAM" id="MobiDB-lite"/>
    </source>
</evidence>
<evidence type="ECO:0000305" key="3"/>
<sequence length="118" mass="13098">MARIAGVNIPDNKHAVISLTYIFGIGRTRSRAICAATGVAETAKIGSLSDDVLDELRGEVAKYTVEGDLRREVSMSIKRLMDLGCNRGIRHRRSLPVRGQRTKTNARTRKGPRKPIRK</sequence>
<protein>
    <recommendedName>
        <fullName evidence="1">Small ribosomal subunit protein uS13</fullName>
    </recommendedName>
    <alternativeName>
        <fullName evidence="3">30S ribosomal protein S13</fullName>
    </alternativeName>
</protein>
<keyword id="KW-0687">Ribonucleoprotein</keyword>
<keyword id="KW-0689">Ribosomal protein</keyword>
<keyword id="KW-0694">RNA-binding</keyword>
<keyword id="KW-0699">rRNA-binding</keyword>
<keyword id="KW-0820">tRNA-binding</keyword>